<name>DPDS_MYCBO</name>
<dbReference type="EC" id="2.5.1.86"/>
<dbReference type="EC" id="2.5.1.87"/>
<dbReference type="EMBL" id="LT708304">
    <property type="protein sequence ID" value="SIU00994.1"/>
    <property type="molecule type" value="Genomic_DNA"/>
</dbReference>
<dbReference type="RefSeq" id="NP_856031.1">
    <property type="nucleotide sequence ID" value="NC_002945.3"/>
</dbReference>
<dbReference type="RefSeq" id="WP_003412212.1">
    <property type="nucleotide sequence ID" value="NC_002945.4"/>
</dbReference>
<dbReference type="SMR" id="P60478"/>
<dbReference type="KEGG" id="mbo:BQ2027_MB2382C"/>
<dbReference type="PATRIC" id="fig|233413.5.peg.2617"/>
<dbReference type="Proteomes" id="UP000001419">
    <property type="component" value="Chromosome"/>
</dbReference>
<dbReference type="GO" id="GO:0005829">
    <property type="term" value="C:cytosol"/>
    <property type="evidence" value="ECO:0007669"/>
    <property type="project" value="TreeGrafter"/>
</dbReference>
<dbReference type="GO" id="GO:0005886">
    <property type="term" value="C:plasma membrane"/>
    <property type="evidence" value="ECO:0007669"/>
    <property type="project" value="UniProtKB-SubCell"/>
</dbReference>
<dbReference type="GO" id="GO:0008834">
    <property type="term" value="F:ditrans,polycis-undecaprenyl-diphosphate synthase [(2E,6E)-farnesyl-diphosphate specific] activity"/>
    <property type="evidence" value="ECO:0007669"/>
    <property type="project" value="TreeGrafter"/>
</dbReference>
<dbReference type="GO" id="GO:0000287">
    <property type="term" value="F:magnesium ion binding"/>
    <property type="evidence" value="ECO:0007669"/>
    <property type="project" value="UniProtKB-UniRule"/>
</dbReference>
<dbReference type="GO" id="GO:0030145">
    <property type="term" value="F:manganese ion binding"/>
    <property type="evidence" value="ECO:0007669"/>
    <property type="project" value="TreeGrafter"/>
</dbReference>
<dbReference type="GO" id="GO:0033850">
    <property type="term" value="F:Z-farnesyl diphosphate synthase activity"/>
    <property type="evidence" value="ECO:0007669"/>
    <property type="project" value="TreeGrafter"/>
</dbReference>
<dbReference type="GO" id="GO:0016094">
    <property type="term" value="P:polyprenol biosynthetic process"/>
    <property type="evidence" value="ECO:0007669"/>
    <property type="project" value="TreeGrafter"/>
</dbReference>
<dbReference type="CDD" id="cd00475">
    <property type="entry name" value="Cis_IPPS"/>
    <property type="match status" value="1"/>
</dbReference>
<dbReference type="FunFam" id="3.40.1180.10:FF:000004">
    <property type="entry name" value="Isoprenyl transferase"/>
    <property type="match status" value="1"/>
</dbReference>
<dbReference type="Gene3D" id="3.40.1180.10">
    <property type="entry name" value="Decaprenyl diphosphate synthase-like"/>
    <property type="match status" value="1"/>
</dbReference>
<dbReference type="HAMAP" id="MF_01139">
    <property type="entry name" value="ISPT"/>
    <property type="match status" value="1"/>
</dbReference>
<dbReference type="InterPro" id="IPR001441">
    <property type="entry name" value="UPP_synth-like"/>
</dbReference>
<dbReference type="InterPro" id="IPR018520">
    <property type="entry name" value="UPP_synth-like_CS"/>
</dbReference>
<dbReference type="InterPro" id="IPR036424">
    <property type="entry name" value="UPP_synth-like_sf"/>
</dbReference>
<dbReference type="NCBIfam" id="NF011402">
    <property type="entry name" value="PRK14827.1"/>
    <property type="match status" value="1"/>
</dbReference>
<dbReference type="NCBIfam" id="NF011404">
    <property type="entry name" value="PRK14829.1"/>
    <property type="match status" value="1"/>
</dbReference>
<dbReference type="NCBIfam" id="TIGR00055">
    <property type="entry name" value="uppS"/>
    <property type="match status" value="1"/>
</dbReference>
<dbReference type="PANTHER" id="PTHR10291:SF0">
    <property type="entry name" value="DEHYDRODOLICHYL DIPHOSPHATE SYNTHASE 2"/>
    <property type="match status" value="1"/>
</dbReference>
<dbReference type="PANTHER" id="PTHR10291">
    <property type="entry name" value="DEHYDRODOLICHYL DIPHOSPHATE SYNTHASE FAMILY MEMBER"/>
    <property type="match status" value="1"/>
</dbReference>
<dbReference type="Pfam" id="PF01255">
    <property type="entry name" value="Prenyltransf"/>
    <property type="match status" value="1"/>
</dbReference>
<dbReference type="SUPFAM" id="SSF64005">
    <property type="entry name" value="Undecaprenyl diphosphate synthase"/>
    <property type="match status" value="1"/>
</dbReference>
<dbReference type="PROSITE" id="PS01066">
    <property type="entry name" value="UPP_SYNTHASE"/>
    <property type="match status" value="1"/>
</dbReference>
<gene>
    <name type="primary">uppS</name>
    <name type="ordered locus">BQ2027_MB2382C</name>
</gene>
<evidence type="ECO:0000250" key="1"/>
<evidence type="ECO:0000256" key="2">
    <source>
        <dbReference type="SAM" id="MobiDB-lite"/>
    </source>
</evidence>
<evidence type="ECO:0000305" key="3"/>
<accession>P60478</accession>
<accession>A0A1R3Y360</accession>
<accession>O05837</accession>
<accession>X2BKF4</accession>
<protein>
    <recommendedName>
        <fullName>Decaprenyl diphosphate synthase</fullName>
        <shortName>DecaPP</shortName>
        <ecNumber>2.5.1.86</ecNumber>
        <ecNumber>2.5.1.87</ecNumber>
    </recommendedName>
    <alternativeName>
        <fullName>Decaprenyl pyrophosphate synthase</fullName>
    </alternativeName>
    <alternativeName>
        <fullName>Long-chain isoprenyl diphosphate synthase</fullName>
    </alternativeName>
    <alternativeName>
        <fullName>Trans,polycis-decaprenyl diphosphate synthase</fullName>
    </alternativeName>
</protein>
<proteinExistence type="inferred from homology"/>
<feature type="chain" id="PRO_0000123638" description="Decaprenyl diphosphate synthase">
    <location>
        <begin position="1"/>
        <end position="296"/>
    </location>
</feature>
<feature type="region of interest" description="Disordered" evidence="2">
    <location>
        <begin position="1"/>
        <end position="24"/>
    </location>
</feature>
<feature type="active site" evidence="1">
    <location>
        <position position="76"/>
    </location>
</feature>
<feature type="active site" description="Proton acceptor" evidence="1">
    <location>
        <position position="124"/>
    </location>
</feature>
<feature type="binding site" evidence="1">
    <location>
        <position position="76"/>
    </location>
    <ligand>
        <name>Mg(2+)</name>
        <dbReference type="ChEBI" id="CHEBI:18420"/>
    </ligand>
</feature>
<feature type="binding site" evidence="1">
    <location>
        <begin position="77"/>
        <end position="80"/>
    </location>
    <ligand>
        <name>substrate</name>
    </ligand>
</feature>
<feature type="binding site" evidence="1">
    <location>
        <position position="81"/>
    </location>
    <ligand>
        <name>substrate</name>
    </ligand>
</feature>
<feature type="binding site" evidence="1">
    <location>
        <position position="89"/>
    </location>
    <ligand>
        <name>substrate</name>
    </ligand>
</feature>
<feature type="binding site" evidence="1">
    <location>
        <position position="93"/>
    </location>
    <ligand>
        <name>substrate</name>
    </ligand>
</feature>
<feature type="binding site" evidence="1">
    <location>
        <begin position="121"/>
        <end position="123"/>
    </location>
    <ligand>
        <name>substrate</name>
    </ligand>
</feature>
<feature type="binding site" evidence="1">
    <location>
        <position position="125"/>
    </location>
    <ligand>
        <name>substrate</name>
    </ligand>
</feature>
<feature type="binding site" evidence="1">
    <location>
        <position position="127"/>
    </location>
    <ligand>
        <name>substrate</name>
    </ligand>
</feature>
<feature type="binding site" evidence="1">
    <location>
        <position position="244"/>
    </location>
    <ligand>
        <name>substrate</name>
    </ligand>
</feature>
<feature type="binding site" evidence="1">
    <location>
        <begin position="250"/>
        <end position="252"/>
    </location>
    <ligand>
        <name>substrate</name>
    </ligand>
</feature>
<feature type="binding site" evidence="1">
    <location>
        <position position="263"/>
    </location>
    <ligand>
        <name>Mg(2+)</name>
        <dbReference type="ChEBI" id="CHEBI:18420"/>
    </ligand>
</feature>
<organism>
    <name type="scientific">Mycobacterium bovis (strain ATCC BAA-935 / AF2122/97)</name>
    <dbReference type="NCBI Taxonomy" id="233413"/>
    <lineage>
        <taxon>Bacteria</taxon>
        <taxon>Bacillati</taxon>
        <taxon>Actinomycetota</taxon>
        <taxon>Actinomycetes</taxon>
        <taxon>Mycobacteriales</taxon>
        <taxon>Mycobacteriaceae</taxon>
        <taxon>Mycobacterium</taxon>
        <taxon>Mycobacterium tuberculosis complex</taxon>
    </lineage>
</organism>
<sequence length="296" mass="33791">MARDARKRTSSNFPQLPPAPDDYPTFPDTSTWPVVFPELPAAPYGGPCRPPQHTSKAAAPRIPADRLPNHVAIVMDGNGRWATQRGLARTEGHKMGEAVVIDIACGAIELGIKWLSLYAFSTENWKRSPEEVRFLMGFNRDVVRRRRDTLKKLGVRIRWVGSRPRLWRSVINELAVAEEMTKSNDVITINYCVNYGGRTEITEATREIAREVAAGRLNPERITESTIARHLQRPDIPDVDLFLRTSGEQRSSNFMLWQAAYAEYIFQDKLWPDYDRRDLWAACEEYASRTRRFGSA</sequence>
<comment type="function">
    <text>Catalyzes the sequential condensation of isopentenyl diphosphate (IPP) in the cis configuration with (2Z,6E)-farnesyl diphosphate (Z-FPP or EZ-FPP) generating the 50 carbon product trans,polycis-decaprenyl diphosphate. When (2E,6E)-farnesyl diphosphate (E-FPP or EE-FPP) is used in vitro, both primary products decaprenyl diphosphate and (2E,6E,10E)-geranylgeranyl diphosphate (EEE-GGPP) are synthesized. M.tuberculosis does not synthesize (2E,6E,10Z)-geranylgeranyl diphosphate (EEZ-GGPP) and heptaprenyl diphosphate. Can also accept many different allylic substrates, including E-geranyl diphosphate (E-GPP), neryl diphosphate (NPP), and all-trans-geranyl-geranyl diphosphate.</text>
</comment>
<comment type="catalytic activity">
    <reaction>
        <text>(2Z,6E)-farnesyl diphosphate + 7 isopentenyl diphosphate = (2Z,6Z,10Z,14Z,18Z,22Z,26Z,30Z,34E)-decaprenyl diphosphate + 7 diphosphate</text>
        <dbReference type="Rhea" id="RHEA:47096"/>
        <dbReference type="ChEBI" id="CHEBI:33019"/>
        <dbReference type="ChEBI" id="CHEBI:87356"/>
        <dbReference type="ChEBI" id="CHEBI:128769"/>
        <dbReference type="ChEBI" id="CHEBI:162247"/>
        <dbReference type="EC" id="2.5.1.86"/>
    </reaction>
</comment>
<comment type="catalytic activity">
    <reaction>
        <text>n isopentenyl diphosphate + (2E,6E)-farnesyl diphosphate = a di-trans,poly-cis-polyprenyl diphosphate + n diphosphate</text>
        <dbReference type="Rhea" id="RHEA:53008"/>
        <dbReference type="Rhea" id="RHEA-COMP:19494"/>
        <dbReference type="ChEBI" id="CHEBI:33019"/>
        <dbReference type="ChEBI" id="CHEBI:128769"/>
        <dbReference type="ChEBI" id="CHEBI:136960"/>
        <dbReference type="ChEBI" id="CHEBI:175763"/>
        <dbReference type="EC" id="2.5.1.87"/>
    </reaction>
</comment>
<comment type="cofactor">
    <cofactor evidence="1">
        <name>Mg(2+)</name>
        <dbReference type="ChEBI" id="CHEBI:18420"/>
    </cofactor>
    <text evidence="1">Binds 2 magnesium ions per subunit.</text>
</comment>
<comment type="subunit">
    <text evidence="1">Homodimer.</text>
</comment>
<comment type="subcellular location">
    <subcellularLocation>
        <location evidence="1">Cell membrane</location>
    </subcellularLocation>
</comment>
<comment type="similarity">
    <text evidence="3">Belongs to the UPP synthase family.</text>
</comment>
<keyword id="KW-1003">Cell membrane</keyword>
<keyword id="KW-0460">Magnesium</keyword>
<keyword id="KW-0472">Membrane</keyword>
<keyword id="KW-0479">Metal-binding</keyword>
<keyword id="KW-1185">Reference proteome</keyword>
<keyword id="KW-0808">Transferase</keyword>
<reference key="1">
    <citation type="journal article" date="2003" name="Proc. Natl. Acad. Sci. U.S.A.">
        <title>The complete genome sequence of Mycobacterium bovis.</title>
        <authorList>
            <person name="Garnier T."/>
            <person name="Eiglmeier K."/>
            <person name="Camus J.-C."/>
            <person name="Medina N."/>
            <person name="Mansoor H."/>
            <person name="Pryor M."/>
            <person name="Duthoy S."/>
            <person name="Grondin S."/>
            <person name="Lacroix C."/>
            <person name="Monsempe C."/>
            <person name="Simon S."/>
            <person name="Harris B."/>
            <person name="Atkin R."/>
            <person name="Doggett J."/>
            <person name="Mayes R."/>
            <person name="Keating L."/>
            <person name="Wheeler P.R."/>
            <person name="Parkhill J."/>
            <person name="Barrell B.G."/>
            <person name="Cole S.T."/>
            <person name="Gordon S.V."/>
            <person name="Hewinson R.G."/>
        </authorList>
    </citation>
    <scope>NUCLEOTIDE SEQUENCE [LARGE SCALE GENOMIC DNA]</scope>
    <source>
        <strain>ATCC BAA-935 / AF2122/97</strain>
    </source>
</reference>
<reference key="2">
    <citation type="journal article" date="2017" name="Genome Announc.">
        <title>Updated reference genome sequence and annotation of Mycobacterium bovis AF2122/97.</title>
        <authorList>
            <person name="Malone K.M."/>
            <person name="Farrell D."/>
            <person name="Stuber T.P."/>
            <person name="Schubert O.T."/>
            <person name="Aebersold R."/>
            <person name="Robbe-Austerman S."/>
            <person name="Gordon S.V."/>
        </authorList>
    </citation>
    <scope>NUCLEOTIDE SEQUENCE [LARGE SCALE GENOMIC DNA]</scope>
    <scope>GENOME REANNOTATION</scope>
    <source>
        <strain>ATCC BAA-935 / AF2122/97</strain>
    </source>
</reference>